<sequence>MAKAKFQRTKPHVNIGTIGHVDHGKTTLTAAITKVLHDKFPDLNETKAFDQIDNAPEERQRGITINIAHVEYQTDKRHYAHVDAPGHADYIKNMITGAAQMDGAILVVAATDGPMPQTREHVLLARQVGVPYILVALNKADAVDDEELLELVEMEVRELLAAQEFDEDAPVVRVSALKALEGDAKWVASVEELMNAVDESIPDPVRETDKPFLMPVEDVFTITGRGTVVTGRVERGVINVNEEVEIVGIRPSTTKTTVTGVEMFRKLLDQGQAGDNVGLLLRGVKREDVERGQVVTKPGTTTPHTEFEGQVYILSKDEGGRHTPFFNNYRPQFYFRTTDVTGVVTLPEGTEMVMPGDNTNISVKLIQPVAMDEGLRFAIREGGRTVGAGRVTKIIK</sequence>
<evidence type="ECO:0000250" key="1"/>
<evidence type="ECO:0000255" key="2">
    <source>
        <dbReference type="HAMAP-Rule" id="MF_00118"/>
    </source>
</evidence>
<protein>
    <recommendedName>
        <fullName evidence="2">Elongation factor Tu</fullName>
        <shortName evidence="2">EF-Tu</shortName>
        <ecNumber evidence="2">3.6.5.3</ecNumber>
    </recommendedName>
</protein>
<name>EFTU_MYCTA</name>
<gene>
    <name evidence="2" type="primary">tuf</name>
    <name type="ordered locus">MRA_0694</name>
</gene>
<comment type="function">
    <text evidence="2">GTP hydrolase that promotes the GTP-dependent binding of aminoacyl-tRNA to the A-site of ribosomes during protein biosynthesis.</text>
</comment>
<comment type="catalytic activity">
    <reaction evidence="2">
        <text>GTP + H2O = GDP + phosphate + H(+)</text>
        <dbReference type="Rhea" id="RHEA:19669"/>
        <dbReference type="ChEBI" id="CHEBI:15377"/>
        <dbReference type="ChEBI" id="CHEBI:15378"/>
        <dbReference type="ChEBI" id="CHEBI:37565"/>
        <dbReference type="ChEBI" id="CHEBI:43474"/>
        <dbReference type="ChEBI" id="CHEBI:58189"/>
        <dbReference type="EC" id="3.6.5.3"/>
    </reaction>
    <physiologicalReaction direction="left-to-right" evidence="2">
        <dbReference type="Rhea" id="RHEA:19670"/>
    </physiologicalReaction>
</comment>
<comment type="subunit">
    <text evidence="2">Monomer.</text>
</comment>
<comment type="subcellular location">
    <subcellularLocation>
        <location evidence="2">Cytoplasm</location>
    </subcellularLocation>
</comment>
<comment type="similarity">
    <text evidence="2">Belongs to the TRAFAC class translation factor GTPase superfamily. Classic translation factor GTPase family. EF-Tu/EF-1A subfamily.</text>
</comment>
<accession>A5U071</accession>
<feature type="chain" id="PRO_1000015707" description="Elongation factor Tu">
    <location>
        <begin position="1"/>
        <end position="396"/>
    </location>
</feature>
<feature type="domain" description="tr-type G">
    <location>
        <begin position="10"/>
        <end position="205"/>
    </location>
</feature>
<feature type="region of interest" description="G1" evidence="1">
    <location>
        <begin position="19"/>
        <end position="26"/>
    </location>
</feature>
<feature type="region of interest" description="G2" evidence="1">
    <location>
        <begin position="62"/>
        <end position="66"/>
    </location>
</feature>
<feature type="region of interest" description="G3" evidence="1">
    <location>
        <begin position="83"/>
        <end position="86"/>
    </location>
</feature>
<feature type="region of interest" description="G4" evidence="1">
    <location>
        <begin position="138"/>
        <end position="141"/>
    </location>
</feature>
<feature type="region of interest" description="G5" evidence="1">
    <location>
        <begin position="175"/>
        <end position="177"/>
    </location>
</feature>
<feature type="binding site" evidence="2">
    <location>
        <begin position="19"/>
        <end position="26"/>
    </location>
    <ligand>
        <name>GTP</name>
        <dbReference type="ChEBI" id="CHEBI:37565"/>
    </ligand>
</feature>
<feature type="binding site" evidence="2">
    <location>
        <position position="26"/>
    </location>
    <ligand>
        <name>Mg(2+)</name>
        <dbReference type="ChEBI" id="CHEBI:18420"/>
    </ligand>
</feature>
<feature type="binding site" evidence="2">
    <location>
        <begin position="83"/>
        <end position="87"/>
    </location>
    <ligand>
        <name>GTP</name>
        <dbReference type="ChEBI" id="CHEBI:37565"/>
    </ligand>
</feature>
<feature type="binding site" evidence="2">
    <location>
        <begin position="138"/>
        <end position="141"/>
    </location>
    <ligand>
        <name>GTP</name>
        <dbReference type="ChEBI" id="CHEBI:37565"/>
    </ligand>
</feature>
<keyword id="KW-0963">Cytoplasm</keyword>
<keyword id="KW-0251">Elongation factor</keyword>
<keyword id="KW-0342">GTP-binding</keyword>
<keyword id="KW-0378">Hydrolase</keyword>
<keyword id="KW-0460">Magnesium</keyword>
<keyword id="KW-0479">Metal-binding</keyword>
<keyword id="KW-0547">Nucleotide-binding</keyword>
<keyword id="KW-0648">Protein biosynthesis</keyword>
<keyword id="KW-1185">Reference proteome</keyword>
<organism>
    <name type="scientific">Mycobacterium tuberculosis (strain ATCC 25177 / H37Ra)</name>
    <dbReference type="NCBI Taxonomy" id="419947"/>
    <lineage>
        <taxon>Bacteria</taxon>
        <taxon>Bacillati</taxon>
        <taxon>Actinomycetota</taxon>
        <taxon>Actinomycetes</taxon>
        <taxon>Mycobacteriales</taxon>
        <taxon>Mycobacteriaceae</taxon>
        <taxon>Mycobacterium</taxon>
        <taxon>Mycobacterium tuberculosis complex</taxon>
    </lineage>
</organism>
<proteinExistence type="inferred from homology"/>
<reference key="1">
    <citation type="journal article" date="2008" name="PLoS ONE">
        <title>Genetic basis of virulence attenuation revealed by comparative genomic analysis of Mycobacterium tuberculosis strain H37Ra versus H37Rv.</title>
        <authorList>
            <person name="Zheng H."/>
            <person name="Lu L."/>
            <person name="Wang B."/>
            <person name="Pu S."/>
            <person name="Zhang X."/>
            <person name="Zhu G."/>
            <person name="Shi W."/>
            <person name="Zhang L."/>
            <person name="Wang H."/>
            <person name="Wang S."/>
            <person name="Zhao G."/>
            <person name="Zhang Y."/>
        </authorList>
    </citation>
    <scope>NUCLEOTIDE SEQUENCE [LARGE SCALE GENOMIC DNA]</scope>
    <source>
        <strain>ATCC 25177 / H37Ra</strain>
    </source>
</reference>
<dbReference type="EC" id="3.6.5.3" evidence="2"/>
<dbReference type="EMBL" id="CP000611">
    <property type="protein sequence ID" value="ABQ72421.1"/>
    <property type="molecule type" value="Genomic_DNA"/>
</dbReference>
<dbReference type="RefSeq" id="WP_003403463.1">
    <property type="nucleotide sequence ID" value="NZ_CP016972.1"/>
</dbReference>
<dbReference type="SMR" id="A5U071"/>
<dbReference type="GeneID" id="45424647"/>
<dbReference type="KEGG" id="mra:MRA_0694"/>
<dbReference type="eggNOG" id="COG0050">
    <property type="taxonomic scope" value="Bacteria"/>
</dbReference>
<dbReference type="HOGENOM" id="CLU_007265_0_1_11"/>
<dbReference type="Proteomes" id="UP000001988">
    <property type="component" value="Chromosome"/>
</dbReference>
<dbReference type="GO" id="GO:0005829">
    <property type="term" value="C:cytosol"/>
    <property type="evidence" value="ECO:0007669"/>
    <property type="project" value="TreeGrafter"/>
</dbReference>
<dbReference type="GO" id="GO:0005525">
    <property type="term" value="F:GTP binding"/>
    <property type="evidence" value="ECO:0007669"/>
    <property type="project" value="UniProtKB-UniRule"/>
</dbReference>
<dbReference type="GO" id="GO:0003924">
    <property type="term" value="F:GTPase activity"/>
    <property type="evidence" value="ECO:0007669"/>
    <property type="project" value="InterPro"/>
</dbReference>
<dbReference type="GO" id="GO:0003746">
    <property type="term" value="F:translation elongation factor activity"/>
    <property type="evidence" value="ECO:0007669"/>
    <property type="project" value="UniProtKB-UniRule"/>
</dbReference>
<dbReference type="CDD" id="cd01884">
    <property type="entry name" value="EF_Tu"/>
    <property type="match status" value="1"/>
</dbReference>
<dbReference type="CDD" id="cd03697">
    <property type="entry name" value="EFTU_II"/>
    <property type="match status" value="1"/>
</dbReference>
<dbReference type="CDD" id="cd03707">
    <property type="entry name" value="EFTU_III"/>
    <property type="match status" value="1"/>
</dbReference>
<dbReference type="FunFam" id="2.40.30.10:FF:000001">
    <property type="entry name" value="Elongation factor Tu"/>
    <property type="match status" value="1"/>
</dbReference>
<dbReference type="FunFam" id="3.40.50.300:FF:000003">
    <property type="entry name" value="Elongation factor Tu"/>
    <property type="match status" value="1"/>
</dbReference>
<dbReference type="Gene3D" id="3.40.50.300">
    <property type="entry name" value="P-loop containing nucleotide triphosphate hydrolases"/>
    <property type="match status" value="1"/>
</dbReference>
<dbReference type="Gene3D" id="2.40.30.10">
    <property type="entry name" value="Translation factors"/>
    <property type="match status" value="2"/>
</dbReference>
<dbReference type="HAMAP" id="MF_00118_B">
    <property type="entry name" value="EF_Tu_B"/>
    <property type="match status" value="1"/>
</dbReference>
<dbReference type="InterPro" id="IPR041709">
    <property type="entry name" value="EF-Tu_GTP-bd"/>
</dbReference>
<dbReference type="InterPro" id="IPR050055">
    <property type="entry name" value="EF-Tu_GTPase"/>
</dbReference>
<dbReference type="InterPro" id="IPR004161">
    <property type="entry name" value="EFTu-like_2"/>
</dbReference>
<dbReference type="InterPro" id="IPR033720">
    <property type="entry name" value="EFTU_2"/>
</dbReference>
<dbReference type="InterPro" id="IPR031157">
    <property type="entry name" value="G_TR_CS"/>
</dbReference>
<dbReference type="InterPro" id="IPR027417">
    <property type="entry name" value="P-loop_NTPase"/>
</dbReference>
<dbReference type="InterPro" id="IPR005225">
    <property type="entry name" value="Small_GTP-bd"/>
</dbReference>
<dbReference type="InterPro" id="IPR000795">
    <property type="entry name" value="T_Tr_GTP-bd_dom"/>
</dbReference>
<dbReference type="InterPro" id="IPR009000">
    <property type="entry name" value="Transl_B-barrel_sf"/>
</dbReference>
<dbReference type="InterPro" id="IPR009001">
    <property type="entry name" value="Transl_elong_EF1A/Init_IF2_C"/>
</dbReference>
<dbReference type="InterPro" id="IPR004541">
    <property type="entry name" value="Transl_elong_EFTu/EF1A_bac/org"/>
</dbReference>
<dbReference type="InterPro" id="IPR004160">
    <property type="entry name" value="Transl_elong_EFTu/EF1A_C"/>
</dbReference>
<dbReference type="NCBIfam" id="TIGR00485">
    <property type="entry name" value="EF-Tu"/>
    <property type="match status" value="1"/>
</dbReference>
<dbReference type="NCBIfam" id="NF000766">
    <property type="entry name" value="PRK00049.1"/>
    <property type="match status" value="1"/>
</dbReference>
<dbReference type="NCBIfam" id="NF009372">
    <property type="entry name" value="PRK12735.1"/>
    <property type="match status" value="1"/>
</dbReference>
<dbReference type="NCBIfam" id="NF009373">
    <property type="entry name" value="PRK12736.1"/>
    <property type="match status" value="1"/>
</dbReference>
<dbReference type="NCBIfam" id="TIGR00231">
    <property type="entry name" value="small_GTP"/>
    <property type="match status" value="1"/>
</dbReference>
<dbReference type="PANTHER" id="PTHR43721:SF22">
    <property type="entry name" value="ELONGATION FACTOR TU, MITOCHONDRIAL"/>
    <property type="match status" value="1"/>
</dbReference>
<dbReference type="PANTHER" id="PTHR43721">
    <property type="entry name" value="ELONGATION FACTOR TU-RELATED"/>
    <property type="match status" value="1"/>
</dbReference>
<dbReference type="Pfam" id="PF00009">
    <property type="entry name" value="GTP_EFTU"/>
    <property type="match status" value="1"/>
</dbReference>
<dbReference type="Pfam" id="PF03144">
    <property type="entry name" value="GTP_EFTU_D2"/>
    <property type="match status" value="1"/>
</dbReference>
<dbReference type="Pfam" id="PF03143">
    <property type="entry name" value="GTP_EFTU_D3"/>
    <property type="match status" value="1"/>
</dbReference>
<dbReference type="PRINTS" id="PR00315">
    <property type="entry name" value="ELONGATNFCT"/>
</dbReference>
<dbReference type="SUPFAM" id="SSF50465">
    <property type="entry name" value="EF-Tu/eEF-1alpha/eIF2-gamma C-terminal domain"/>
    <property type="match status" value="1"/>
</dbReference>
<dbReference type="SUPFAM" id="SSF52540">
    <property type="entry name" value="P-loop containing nucleoside triphosphate hydrolases"/>
    <property type="match status" value="1"/>
</dbReference>
<dbReference type="SUPFAM" id="SSF50447">
    <property type="entry name" value="Translation proteins"/>
    <property type="match status" value="1"/>
</dbReference>
<dbReference type="PROSITE" id="PS00301">
    <property type="entry name" value="G_TR_1"/>
    <property type="match status" value="1"/>
</dbReference>
<dbReference type="PROSITE" id="PS51722">
    <property type="entry name" value="G_TR_2"/>
    <property type="match status" value="1"/>
</dbReference>